<protein>
    <recommendedName>
        <fullName evidence="1">Chaperone protein DnaK</fullName>
    </recommendedName>
    <alternativeName>
        <fullName evidence="1">HSP70</fullName>
    </alternativeName>
    <alternativeName>
        <fullName evidence="1">Heat shock 70 kDa protein</fullName>
    </alternativeName>
    <alternativeName>
        <fullName evidence="1">Heat shock protein 70</fullName>
    </alternativeName>
</protein>
<comment type="function">
    <text evidence="1">Acts as a chaperone.</text>
</comment>
<comment type="induction">
    <text evidence="1">By stress conditions e.g. heat shock.</text>
</comment>
<comment type="similarity">
    <text evidence="1">Belongs to the heat shock protein 70 family.</text>
</comment>
<feature type="chain" id="PRO_1000079245" description="Chaperone protein DnaK">
    <location>
        <begin position="1"/>
        <end position="638"/>
    </location>
</feature>
<feature type="region of interest" description="Disordered" evidence="2">
    <location>
        <begin position="601"/>
        <end position="638"/>
    </location>
</feature>
<feature type="compositionally biased region" description="Basic and acidic residues" evidence="2">
    <location>
        <begin position="614"/>
        <end position="623"/>
    </location>
</feature>
<feature type="compositionally biased region" description="Acidic residues" evidence="2">
    <location>
        <begin position="624"/>
        <end position="638"/>
    </location>
</feature>
<feature type="modified residue" description="Phosphothreonine; by autocatalysis" evidence="1">
    <location>
        <position position="198"/>
    </location>
</feature>
<evidence type="ECO:0000255" key="1">
    <source>
        <dbReference type="HAMAP-Rule" id="MF_00332"/>
    </source>
</evidence>
<evidence type="ECO:0000256" key="2">
    <source>
        <dbReference type="SAM" id="MobiDB-lite"/>
    </source>
</evidence>
<gene>
    <name evidence="1" type="primary">dnaK</name>
    <name type="ordered locus">Shal_3167</name>
</gene>
<keyword id="KW-0067">ATP-binding</keyword>
<keyword id="KW-0143">Chaperone</keyword>
<keyword id="KW-0547">Nucleotide-binding</keyword>
<keyword id="KW-0597">Phosphoprotein</keyword>
<keyword id="KW-0346">Stress response</keyword>
<name>DNAK_SHEHH</name>
<accession>B0TQC2</accession>
<proteinExistence type="inferred from homology"/>
<organism>
    <name type="scientific">Shewanella halifaxensis (strain HAW-EB4)</name>
    <dbReference type="NCBI Taxonomy" id="458817"/>
    <lineage>
        <taxon>Bacteria</taxon>
        <taxon>Pseudomonadati</taxon>
        <taxon>Pseudomonadota</taxon>
        <taxon>Gammaproteobacteria</taxon>
        <taxon>Alteromonadales</taxon>
        <taxon>Shewanellaceae</taxon>
        <taxon>Shewanella</taxon>
    </lineage>
</organism>
<dbReference type="EMBL" id="CP000931">
    <property type="protein sequence ID" value="ABZ77714.1"/>
    <property type="molecule type" value="Genomic_DNA"/>
</dbReference>
<dbReference type="RefSeq" id="WP_012278237.1">
    <property type="nucleotide sequence ID" value="NC_010334.1"/>
</dbReference>
<dbReference type="SMR" id="B0TQC2"/>
<dbReference type="STRING" id="458817.Shal_3167"/>
<dbReference type="KEGG" id="shl:Shal_3167"/>
<dbReference type="eggNOG" id="COG0443">
    <property type="taxonomic scope" value="Bacteria"/>
</dbReference>
<dbReference type="HOGENOM" id="CLU_005965_2_1_6"/>
<dbReference type="OrthoDB" id="9766019at2"/>
<dbReference type="Proteomes" id="UP000001317">
    <property type="component" value="Chromosome"/>
</dbReference>
<dbReference type="GO" id="GO:0005524">
    <property type="term" value="F:ATP binding"/>
    <property type="evidence" value="ECO:0007669"/>
    <property type="project" value="UniProtKB-UniRule"/>
</dbReference>
<dbReference type="GO" id="GO:0140662">
    <property type="term" value="F:ATP-dependent protein folding chaperone"/>
    <property type="evidence" value="ECO:0007669"/>
    <property type="project" value="InterPro"/>
</dbReference>
<dbReference type="GO" id="GO:0051082">
    <property type="term" value="F:unfolded protein binding"/>
    <property type="evidence" value="ECO:0007669"/>
    <property type="project" value="InterPro"/>
</dbReference>
<dbReference type="CDD" id="cd10234">
    <property type="entry name" value="ASKHA_NBD_HSP70_DnaK-like"/>
    <property type="match status" value="1"/>
</dbReference>
<dbReference type="FunFam" id="2.60.34.10:FF:000014">
    <property type="entry name" value="Chaperone protein DnaK HSP70"/>
    <property type="match status" value="1"/>
</dbReference>
<dbReference type="FunFam" id="1.20.1270.10:FF:000001">
    <property type="entry name" value="Molecular chaperone DnaK"/>
    <property type="match status" value="1"/>
</dbReference>
<dbReference type="FunFam" id="3.30.420.40:FF:000004">
    <property type="entry name" value="Molecular chaperone DnaK"/>
    <property type="match status" value="1"/>
</dbReference>
<dbReference type="FunFam" id="3.90.640.10:FF:000003">
    <property type="entry name" value="Molecular chaperone DnaK"/>
    <property type="match status" value="1"/>
</dbReference>
<dbReference type="Gene3D" id="1.20.1270.10">
    <property type="match status" value="1"/>
</dbReference>
<dbReference type="Gene3D" id="3.30.420.40">
    <property type="match status" value="2"/>
</dbReference>
<dbReference type="Gene3D" id="3.90.640.10">
    <property type="entry name" value="Actin, Chain A, domain 4"/>
    <property type="match status" value="1"/>
</dbReference>
<dbReference type="Gene3D" id="2.60.34.10">
    <property type="entry name" value="Substrate Binding Domain Of DNAk, Chain A, domain 1"/>
    <property type="match status" value="1"/>
</dbReference>
<dbReference type="HAMAP" id="MF_00332">
    <property type="entry name" value="DnaK"/>
    <property type="match status" value="1"/>
</dbReference>
<dbReference type="InterPro" id="IPR043129">
    <property type="entry name" value="ATPase_NBD"/>
</dbReference>
<dbReference type="InterPro" id="IPR012725">
    <property type="entry name" value="Chaperone_DnaK"/>
</dbReference>
<dbReference type="InterPro" id="IPR018181">
    <property type="entry name" value="Heat_shock_70_CS"/>
</dbReference>
<dbReference type="InterPro" id="IPR029048">
    <property type="entry name" value="HSP70_C_sf"/>
</dbReference>
<dbReference type="InterPro" id="IPR029047">
    <property type="entry name" value="HSP70_peptide-bd_sf"/>
</dbReference>
<dbReference type="InterPro" id="IPR013126">
    <property type="entry name" value="Hsp_70_fam"/>
</dbReference>
<dbReference type="NCBIfam" id="NF001413">
    <property type="entry name" value="PRK00290.1"/>
    <property type="match status" value="1"/>
</dbReference>
<dbReference type="NCBIfam" id="NF003520">
    <property type="entry name" value="PRK05183.1"/>
    <property type="match status" value="1"/>
</dbReference>
<dbReference type="NCBIfam" id="TIGR02350">
    <property type="entry name" value="prok_dnaK"/>
    <property type="match status" value="1"/>
</dbReference>
<dbReference type="PANTHER" id="PTHR19375">
    <property type="entry name" value="HEAT SHOCK PROTEIN 70KDA"/>
    <property type="match status" value="1"/>
</dbReference>
<dbReference type="Pfam" id="PF00012">
    <property type="entry name" value="HSP70"/>
    <property type="match status" value="1"/>
</dbReference>
<dbReference type="PRINTS" id="PR00301">
    <property type="entry name" value="HEATSHOCK70"/>
</dbReference>
<dbReference type="SUPFAM" id="SSF53067">
    <property type="entry name" value="Actin-like ATPase domain"/>
    <property type="match status" value="2"/>
</dbReference>
<dbReference type="SUPFAM" id="SSF100920">
    <property type="entry name" value="Heat shock protein 70kD (HSP70), peptide-binding domain"/>
    <property type="match status" value="1"/>
</dbReference>
<dbReference type="PROSITE" id="PS00297">
    <property type="entry name" value="HSP70_1"/>
    <property type="match status" value="1"/>
</dbReference>
<dbReference type="PROSITE" id="PS00329">
    <property type="entry name" value="HSP70_2"/>
    <property type="match status" value="1"/>
</dbReference>
<dbReference type="PROSITE" id="PS01036">
    <property type="entry name" value="HSP70_3"/>
    <property type="match status" value="1"/>
</dbReference>
<reference key="1">
    <citation type="submission" date="2008-01" db="EMBL/GenBank/DDBJ databases">
        <title>Complete sequence of Shewanella halifaxensis HAW-EB4.</title>
        <authorList>
            <consortium name="US DOE Joint Genome Institute"/>
            <person name="Copeland A."/>
            <person name="Lucas S."/>
            <person name="Lapidus A."/>
            <person name="Glavina del Rio T."/>
            <person name="Dalin E."/>
            <person name="Tice H."/>
            <person name="Bruce D."/>
            <person name="Goodwin L."/>
            <person name="Pitluck S."/>
            <person name="Sims D."/>
            <person name="Brettin T."/>
            <person name="Detter J.C."/>
            <person name="Han C."/>
            <person name="Kuske C.R."/>
            <person name="Schmutz J."/>
            <person name="Larimer F."/>
            <person name="Land M."/>
            <person name="Hauser L."/>
            <person name="Kyrpides N."/>
            <person name="Kim E."/>
            <person name="Zhao J.-S."/>
            <person name="Richardson P."/>
        </authorList>
    </citation>
    <scope>NUCLEOTIDE SEQUENCE [LARGE SCALE GENOMIC DNA]</scope>
    <source>
        <strain>HAW-EB4</strain>
    </source>
</reference>
<sequence length="638" mass="68895">MGRIIGIDLGTTNSCVAVLDGGKARVLENAEGDRTTPSIIAYTADETLVGQSAKRQAVTNPTNTVYAIKRLIGRRFKDDEVQRDVDIMPFKIISADNGDAWVEAQGKKMAPPQISAEILKKMKKTAEDFLGEEVTEAVITVPAYFNDSQRQATKDAGRIAGLEVKRIINEPTAAALAYGIDKKQGDNIVAVYDLGGGTFDISIIEIDSVDGEQTFEVLATNGDTHLGGEDFDNRMIKYLADEFKKEQGLDLRNDPLAMQRLKEAAEKAKIELSSTTQTEVNLPYITADATGPKHLVVKITRAKLESLVEDLIKRSLEPLKVALADADLSVSDINEVILVGGQTRMPKVREEVSAFFGKELRQDVNPDEAVAIGAAVQAGVLSGDVKDVLLLDVTPLSLGIETMGSVMTKLIEKNTTIPTKASQTFSTADDNQSAVTIHVLQGERKQSSGNKSLGQFNLEGIEAAPRGMPQIEVAFDIDADGILHVSATDKKTGKAQNITIKASSGLSDEEVEAMIRDAEAHADEDAKFEELVKSRNQADGMVHATKKQIEEAGEALPADEKEKIEAAMANVETAVKGNDKEAIEKSTQELMEASSKLMEIAQAKAQAEQGQPEGEAKSAKPEDDVVDAEFEEVKDDKK</sequence>